<accession>Q9LHJ9</accession>
<accession>Q9C7B3</accession>
<sequence>MVSSATILRMVAPCWRRPSVKGDHSTRDANGRCDGLLWYKDSGNHVAGEFSMSVIQANNLLEDHSKLESGPVSMFDSGPQATFVGVYDGHGGPEAARFVNKHLFDNIRKFTSENHGMSANVITKAFLATEEDFLSLVRRQWQIKPQIASVGACCLVGIICSGLLYIANAGDSRVVLGRLEKAFKIVKAVQLSSEHNASLESVREELRSLHPNDPQIVVLKHKVWRVKGIIQVSRSIGDAYLKKAEFNREPLLAKFRVPEVFHKPILRAEPAITVHKIHPEDQFLIFASDGLWEHLSNQEAVDIVNTCPRNGIARKLIKTALREAAKKREMRYSDLKKIDRGVRRHFHDDITVIVVFLDSHLVSRSTSRRPLLSISGGGDLAGPST</sequence>
<gene>
    <name evidence="7" type="primary">PP2C38</name>
    <name evidence="6" type="synonym">PP2C-D3</name>
    <name evidence="9" type="ordered locus">At3g12620</name>
    <name evidence="11" type="ORF">MMF12.6</name>
    <name evidence="10" type="ORF">T2E22.7</name>
</gene>
<comment type="function">
    <text evidence="2 4">May dephosphorylate and repress plasma membrane H(+)-ATPases (PM H(+)-ATPases, e.g. AHA1 and AHA2), thus influencing negatively plant growth and fitness (By similarity). Involved in pathogen-associated molecular pattern (PAMP)-triggered immunity (PTI) signaling (PubMed:27494702). Negatively regulates immune responses by controlling the phosphorylation and activation status of BIK1, a central rate-limiting kinase in PTI signaling (PubMed:27494702). Impairs the phosphorylation of the NADPH oxidase RBOHD by BIK1 (PubMed:27494702).</text>
</comment>
<comment type="catalytic activity">
    <reaction evidence="4">
        <text>O-phospho-L-seryl-[protein] + H2O = L-seryl-[protein] + phosphate</text>
        <dbReference type="Rhea" id="RHEA:20629"/>
        <dbReference type="Rhea" id="RHEA-COMP:9863"/>
        <dbReference type="Rhea" id="RHEA-COMP:11604"/>
        <dbReference type="ChEBI" id="CHEBI:15377"/>
        <dbReference type="ChEBI" id="CHEBI:29999"/>
        <dbReference type="ChEBI" id="CHEBI:43474"/>
        <dbReference type="ChEBI" id="CHEBI:83421"/>
        <dbReference type="EC" id="3.1.3.16"/>
    </reaction>
</comment>
<comment type="catalytic activity">
    <reaction evidence="4">
        <text>O-phospho-L-threonyl-[protein] + H2O = L-threonyl-[protein] + phosphate</text>
        <dbReference type="Rhea" id="RHEA:47004"/>
        <dbReference type="Rhea" id="RHEA-COMP:11060"/>
        <dbReference type="Rhea" id="RHEA-COMP:11605"/>
        <dbReference type="ChEBI" id="CHEBI:15377"/>
        <dbReference type="ChEBI" id="CHEBI:30013"/>
        <dbReference type="ChEBI" id="CHEBI:43474"/>
        <dbReference type="ChEBI" id="CHEBI:61977"/>
        <dbReference type="EC" id="3.1.3.16"/>
    </reaction>
</comment>
<comment type="cofactor">
    <cofactor evidence="1">
        <name>Mg(2+)</name>
        <dbReference type="ChEBI" id="CHEBI:18420"/>
    </cofactor>
    <cofactor evidence="1">
        <name>Mn(2+)</name>
        <dbReference type="ChEBI" id="CHEBI:29035"/>
    </cofactor>
    <text evidence="1">Binds 2 magnesium or manganese ions per subunit.</text>
</comment>
<comment type="subunit">
    <text evidence="4">Interacts with BIK1.</text>
</comment>
<comment type="subcellular location">
    <subcellularLocation>
        <location evidence="4">Cell membrane</location>
        <topology evidence="8">Peripheral membrane protein</topology>
    </subcellularLocation>
</comment>
<comment type="PTM">
    <text evidence="4">Phosphorylation at Ser-77 induces dissociation of PP2C38 from BIK1.</text>
</comment>
<comment type="similarity">
    <text evidence="8">Belongs to the PP2C family.</text>
</comment>
<comment type="sequence caution" evidence="8">
    <conflict type="erroneous initiation">
        <sequence resource="EMBL-CDS" id="AAG51012"/>
    </conflict>
    <text>Truncated N-terminus.</text>
</comment>
<name>P2C38_ARATH</name>
<keyword id="KW-1003">Cell membrane</keyword>
<keyword id="KW-0378">Hydrolase</keyword>
<keyword id="KW-0460">Magnesium</keyword>
<keyword id="KW-0464">Manganese</keyword>
<keyword id="KW-0472">Membrane</keyword>
<keyword id="KW-0479">Metal-binding</keyword>
<keyword id="KW-0597">Phosphoprotein</keyword>
<keyword id="KW-0904">Protein phosphatase</keyword>
<keyword id="KW-1185">Reference proteome</keyword>
<dbReference type="EC" id="3.1.3.16" evidence="4"/>
<dbReference type="EMBL" id="AC069474">
    <property type="protein sequence ID" value="AAG51012.1"/>
    <property type="status" value="ALT_INIT"/>
    <property type="molecule type" value="Genomic_DNA"/>
</dbReference>
<dbReference type="EMBL" id="AP002044">
    <property type="protein sequence ID" value="BAB02253.1"/>
    <property type="molecule type" value="Genomic_DNA"/>
</dbReference>
<dbReference type="EMBL" id="CP002686">
    <property type="protein sequence ID" value="AEE75224.1"/>
    <property type="molecule type" value="Genomic_DNA"/>
</dbReference>
<dbReference type="EMBL" id="CP002686">
    <property type="protein sequence ID" value="AEE75225.1"/>
    <property type="molecule type" value="Genomic_DNA"/>
</dbReference>
<dbReference type="EMBL" id="BT004824">
    <property type="protein sequence ID" value="AAO44090.1"/>
    <property type="molecule type" value="mRNA"/>
</dbReference>
<dbReference type="EMBL" id="AK317334">
    <property type="protein sequence ID" value="BAH20008.1"/>
    <property type="molecule type" value="mRNA"/>
</dbReference>
<dbReference type="EMBL" id="AK317402">
    <property type="protein sequence ID" value="BAH20072.1"/>
    <property type="molecule type" value="mRNA"/>
</dbReference>
<dbReference type="EMBL" id="AK227879">
    <property type="protein sequence ID" value="BAE99854.1"/>
    <property type="molecule type" value="mRNA"/>
</dbReference>
<dbReference type="RefSeq" id="NP_001030682.1">
    <property type="nucleotide sequence ID" value="NM_001035605.2"/>
</dbReference>
<dbReference type="RefSeq" id="NP_187868.2">
    <property type="nucleotide sequence ID" value="NM_112097.5"/>
</dbReference>
<dbReference type="SMR" id="Q9LHJ9"/>
<dbReference type="BioGRID" id="5776">
    <property type="interactions" value="3"/>
</dbReference>
<dbReference type="FunCoup" id="Q9LHJ9">
    <property type="interactions" value="3698"/>
</dbReference>
<dbReference type="IntAct" id="Q9LHJ9">
    <property type="interactions" value="3"/>
</dbReference>
<dbReference type="STRING" id="3702.Q9LHJ9"/>
<dbReference type="iPTMnet" id="Q9LHJ9"/>
<dbReference type="PaxDb" id="3702-AT3G12620.2"/>
<dbReference type="ProteomicsDB" id="248795"/>
<dbReference type="DNASU" id="820442"/>
<dbReference type="EnsemblPlants" id="AT3G12620.1">
    <property type="protein sequence ID" value="AT3G12620.1"/>
    <property type="gene ID" value="AT3G12620"/>
</dbReference>
<dbReference type="EnsemblPlants" id="AT3G12620.2">
    <property type="protein sequence ID" value="AT3G12620.2"/>
    <property type="gene ID" value="AT3G12620"/>
</dbReference>
<dbReference type="GeneID" id="820442"/>
<dbReference type="Gramene" id="AT3G12620.1">
    <property type="protein sequence ID" value="AT3G12620.1"/>
    <property type="gene ID" value="AT3G12620"/>
</dbReference>
<dbReference type="Gramene" id="AT3G12620.2">
    <property type="protein sequence ID" value="AT3G12620.2"/>
    <property type="gene ID" value="AT3G12620"/>
</dbReference>
<dbReference type="KEGG" id="ath:AT3G12620"/>
<dbReference type="Araport" id="AT3G12620"/>
<dbReference type="TAIR" id="AT3G12620">
    <property type="gene designation" value="PP2C.D3"/>
</dbReference>
<dbReference type="eggNOG" id="KOG0700">
    <property type="taxonomic scope" value="Eukaryota"/>
</dbReference>
<dbReference type="HOGENOM" id="CLU_013173_2_0_1"/>
<dbReference type="InParanoid" id="Q9LHJ9"/>
<dbReference type="OMA" id="MKHQVWR"/>
<dbReference type="OrthoDB" id="420076at2759"/>
<dbReference type="PhylomeDB" id="Q9LHJ9"/>
<dbReference type="PRO" id="PR:Q9LHJ9"/>
<dbReference type="Proteomes" id="UP000006548">
    <property type="component" value="Chromosome 3"/>
</dbReference>
<dbReference type="ExpressionAtlas" id="Q9LHJ9">
    <property type="expression patterns" value="baseline and differential"/>
</dbReference>
<dbReference type="GO" id="GO:0005886">
    <property type="term" value="C:plasma membrane"/>
    <property type="evidence" value="ECO:0000314"/>
    <property type="project" value="UniProtKB"/>
</dbReference>
<dbReference type="GO" id="GO:0046872">
    <property type="term" value="F:metal ion binding"/>
    <property type="evidence" value="ECO:0007669"/>
    <property type="project" value="UniProtKB-KW"/>
</dbReference>
<dbReference type="GO" id="GO:0004722">
    <property type="term" value="F:protein serine/threonine phosphatase activity"/>
    <property type="evidence" value="ECO:0007669"/>
    <property type="project" value="UniProtKB-EC"/>
</dbReference>
<dbReference type="GO" id="GO:1900425">
    <property type="term" value="P:negative regulation of defense response to bacterium"/>
    <property type="evidence" value="ECO:0000314"/>
    <property type="project" value="UniProtKB"/>
</dbReference>
<dbReference type="CDD" id="cd00143">
    <property type="entry name" value="PP2Cc"/>
    <property type="match status" value="1"/>
</dbReference>
<dbReference type="FunFam" id="3.60.40.10:FF:000008">
    <property type="entry name" value="Phosphatase 2C family protein"/>
    <property type="match status" value="1"/>
</dbReference>
<dbReference type="Gene3D" id="3.60.40.10">
    <property type="entry name" value="PPM-type phosphatase domain"/>
    <property type="match status" value="1"/>
</dbReference>
<dbReference type="InterPro" id="IPR015655">
    <property type="entry name" value="PP2C"/>
</dbReference>
<dbReference type="InterPro" id="IPR000222">
    <property type="entry name" value="PP2C_BS"/>
</dbReference>
<dbReference type="InterPro" id="IPR036457">
    <property type="entry name" value="PPM-type-like_dom_sf"/>
</dbReference>
<dbReference type="InterPro" id="IPR001932">
    <property type="entry name" value="PPM-type_phosphatase-like_dom"/>
</dbReference>
<dbReference type="PANTHER" id="PTHR47992">
    <property type="entry name" value="PROTEIN PHOSPHATASE"/>
    <property type="match status" value="1"/>
</dbReference>
<dbReference type="Pfam" id="PF00481">
    <property type="entry name" value="PP2C"/>
    <property type="match status" value="1"/>
</dbReference>
<dbReference type="SMART" id="SM00332">
    <property type="entry name" value="PP2Cc"/>
    <property type="match status" value="1"/>
</dbReference>
<dbReference type="SUPFAM" id="SSF81606">
    <property type="entry name" value="PP2C-like"/>
    <property type="match status" value="1"/>
</dbReference>
<dbReference type="PROSITE" id="PS01032">
    <property type="entry name" value="PPM_1"/>
    <property type="match status" value="1"/>
</dbReference>
<dbReference type="PROSITE" id="PS51746">
    <property type="entry name" value="PPM_2"/>
    <property type="match status" value="1"/>
</dbReference>
<feature type="chain" id="PRO_0000367963" description="Probable protein phosphatase 2C 38">
    <location>
        <begin position="1"/>
        <end position="385"/>
    </location>
</feature>
<feature type="domain" description="PPM-type phosphatase" evidence="3">
    <location>
        <begin position="46"/>
        <end position="357"/>
    </location>
</feature>
<feature type="binding site" evidence="1">
    <location>
        <position position="88"/>
    </location>
    <ligand>
        <name>Mn(2+)</name>
        <dbReference type="ChEBI" id="CHEBI:29035"/>
        <label>1</label>
    </ligand>
</feature>
<feature type="binding site" evidence="1">
    <location>
        <position position="88"/>
    </location>
    <ligand>
        <name>Mn(2+)</name>
        <dbReference type="ChEBI" id="CHEBI:29035"/>
        <label>2</label>
    </ligand>
</feature>
<feature type="binding site" evidence="1">
    <location>
        <position position="89"/>
    </location>
    <ligand>
        <name>Mn(2+)</name>
        <dbReference type="ChEBI" id="CHEBI:29035"/>
        <label>1</label>
    </ligand>
</feature>
<feature type="binding site" evidence="1">
    <location>
        <position position="289"/>
    </location>
    <ligand>
        <name>Mn(2+)</name>
        <dbReference type="ChEBI" id="CHEBI:29035"/>
        <label>2</label>
    </ligand>
</feature>
<feature type="binding site" evidence="1">
    <location>
        <position position="348"/>
    </location>
    <ligand>
        <name>Mn(2+)</name>
        <dbReference type="ChEBI" id="CHEBI:29035"/>
        <label>2</label>
    </ligand>
</feature>
<feature type="modified residue" description="Phosphoserine" evidence="4">
    <location>
        <position position="77"/>
    </location>
</feature>
<feature type="mutagenesis site" description="Abolishes phosphatase activity; when associated with N-289." evidence="4">
    <original>D</original>
    <variation>N</variation>
    <location>
        <position position="88"/>
    </location>
</feature>
<feature type="mutagenesis site" description="Abolishes phosphatase activity; when associated with N-88." evidence="4">
    <original>D</original>
    <variation>N</variation>
    <location>
        <position position="289"/>
    </location>
</feature>
<proteinExistence type="evidence at protein level"/>
<organism>
    <name type="scientific">Arabidopsis thaliana</name>
    <name type="common">Mouse-ear cress</name>
    <dbReference type="NCBI Taxonomy" id="3702"/>
    <lineage>
        <taxon>Eukaryota</taxon>
        <taxon>Viridiplantae</taxon>
        <taxon>Streptophyta</taxon>
        <taxon>Embryophyta</taxon>
        <taxon>Tracheophyta</taxon>
        <taxon>Spermatophyta</taxon>
        <taxon>Magnoliopsida</taxon>
        <taxon>eudicotyledons</taxon>
        <taxon>Gunneridae</taxon>
        <taxon>Pentapetalae</taxon>
        <taxon>rosids</taxon>
        <taxon>malvids</taxon>
        <taxon>Brassicales</taxon>
        <taxon>Brassicaceae</taxon>
        <taxon>Camelineae</taxon>
        <taxon>Arabidopsis</taxon>
    </lineage>
</organism>
<evidence type="ECO:0000250" key="1">
    <source>
        <dbReference type="UniProtKB" id="P35813"/>
    </source>
</evidence>
<evidence type="ECO:0000250" key="2">
    <source>
        <dbReference type="UniProtKB" id="Q84JD5"/>
    </source>
</evidence>
<evidence type="ECO:0000255" key="3">
    <source>
        <dbReference type="PROSITE-ProRule" id="PRU01082"/>
    </source>
</evidence>
<evidence type="ECO:0000269" key="4">
    <source>
    </source>
</evidence>
<evidence type="ECO:0000303" key="5">
    <source>
    </source>
</evidence>
<evidence type="ECO:0000303" key="6">
    <source>
    </source>
</evidence>
<evidence type="ECO:0000303" key="7">
    <source>
    </source>
</evidence>
<evidence type="ECO:0000305" key="8"/>
<evidence type="ECO:0000312" key="9">
    <source>
        <dbReference type="Araport" id="AT3G12620"/>
    </source>
</evidence>
<evidence type="ECO:0000312" key="10">
    <source>
        <dbReference type="EMBL" id="AAG51012.1"/>
    </source>
</evidence>
<evidence type="ECO:0000312" key="11">
    <source>
        <dbReference type="EMBL" id="BAB02253.1"/>
    </source>
</evidence>
<reference key="1">
    <citation type="journal article" date="2000" name="Nature">
        <title>Sequence and analysis of chromosome 3 of the plant Arabidopsis thaliana.</title>
        <authorList>
            <person name="Salanoubat M."/>
            <person name="Lemcke K."/>
            <person name="Rieger M."/>
            <person name="Ansorge W."/>
            <person name="Unseld M."/>
            <person name="Fartmann B."/>
            <person name="Valle G."/>
            <person name="Bloecker H."/>
            <person name="Perez-Alonso M."/>
            <person name="Obermaier B."/>
            <person name="Delseny M."/>
            <person name="Boutry M."/>
            <person name="Grivell L.A."/>
            <person name="Mache R."/>
            <person name="Puigdomenech P."/>
            <person name="De Simone V."/>
            <person name="Choisne N."/>
            <person name="Artiguenave F."/>
            <person name="Robert C."/>
            <person name="Brottier P."/>
            <person name="Wincker P."/>
            <person name="Cattolico L."/>
            <person name="Weissenbach J."/>
            <person name="Saurin W."/>
            <person name="Quetier F."/>
            <person name="Schaefer M."/>
            <person name="Mueller-Auer S."/>
            <person name="Gabel C."/>
            <person name="Fuchs M."/>
            <person name="Benes V."/>
            <person name="Wurmbach E."/>
            <person name="Drzonek H."/>
            <person name="Erfle H."/>
            <person name="Jordan N."/>
            <person name="Bangert S."/>
            <person name="Wiedelmann R."/>
            <person name="Kranz H."/>
            <person name="Voss H."/>
            <person name="Holland R."/>
            <person name="Brandt P."/>
            <person name="Nyakatura G."/>
            <person name="Vezzi A."/>
            <person name="D'Angelo M."/>
            <person name="Pallavicini A."/>
            <person name="Toppo S."/>
            <person name="Simionati B."/>
            <person name="Conrad A."/>
            <person name="Hornischer K."/>
            <person name="Kauer G."/>
            <person name="Loehnert T.-H."/>
            <person name="Nordsiek G."/>
            <person name="Reichelt J."/>
            <person name="Scharfe M."/>
            <person name="Schoen O."/>
            <person name="Bargues M."/>
            <person name="Terol J."/>
            <person name="Climent J."/>
            <person name="Navarro P."/>
            <person name="Collado C."/>
            <person name="Perez-Perez A."/>
            <person name="Ottenwaelder B."/>
            <person name="Duchemin D."/>
            <person name="Cooke R."/>
            <person name="Laudie M."/>
            <person name="Berger-Llauro C."/>
            <person name="Purnelle B."/>
            <person name="Masuy D."/>
            <person name="de Haan M."/>
            <person name="Maarse A.C."/>
            <person name="Alcaraz J.-P."/>
            <person name="Cottet A."/>
            <person name="Casacuberta E."/>
            <person name="Monfort A."/>
            <person name="Argiriou A."/>
            <person name="Flores M."/>
            <person name="Liguori R."/>
            <person name="Vitale D."/>
            <person name="Mannhaupt G."/>
            <person name="Haase D."/>
            <person name="Schoof H."/>
            <person name="Rudd S."/>
            <person name="Zaccaria P."/>
            <person name="Mewes H.-W."/>
            <person name="Mayer K.F.X."/>
            <person name="Kaul S."/>
            <person name="Town C.D."/>
            <person name="Koo H.L."/>
            <person name="Tallon L.J."/>
            <person name="Jenkins J."/>
            <person name="Rooney T."/>
            <person name="Rizzo M."/>
            <person name="Walts A."/>
            <person name="Utterback T."/>
            <person name="Fujii C.Y."/>
            <person name="Shea T.P."/>
            <person name="Creasy T.H."/>
            <person name="Haas B."/>
            <person name="Maiti R."/>
            <person name="Wu D."/>
            <person name="Peterson J."/>
            <person name="Van Aken S."/>
            <person name="Pai G."/>
            <person name="Militscher J."/>
            <person name="Sellers P."/>
            <person name="Gill J.E."/>
            <person name="Feldblyum T.V."/>
            <person name="Preuss D."/>
            <person name="Lin X."/>
            <person name="Nierman W.C."/>
            <person name="Salzberg S.L."/>
            <person name="White O."/>
            <person name="Venter J.C."/>
            <person name="Fraser C.M."/>
            <person name="Kaneko T."/>
            <person name="Nakamura Y."/>
            <person name="Sato S."/>
            <person name="Kato T."/>
            <person name="Asamizu E."/>
            <person name="Sasamoto S."/>
            <person name="Kimura T."/>
            <person name="Idesawa K."/>
            <person name="Kawashima K."/>
            <person name="Kishida Y."/>
            <person name="Kiyokawa C."/>
            <person name="Kohara M."/>
            <person name="Matsumoto M."/>
            <person name="Matsuno A."/>
            <person name="Muraki A."/>
            <person name="Nakayama S."/>
            <person name="Nakazaki N."/>
            <person name="Shinpo S."/>
            <person name="Takeuchi C."/>
            <person name="Wada T."/>
            <person name="Watanabe A."/>
            <person name="Yamada M."/>
            <person name="Yasuda M."/>
            <person name="Tabata S."/>
        </authorList>
    </citation>
    <scope>NUCLEOTIDE SEQUENCE [LARGE SCALE GENOMIC DNA]</scope>
    <source>
        <strain>cv. Columbia</strain>
    </source>
</reference>
<reference key="2">
    <citation type="journal article" date="2000" name="DNA Res.">
        <title>Structural analysis of Arabidopsis thaliana chromosome 3. II. Sequence features of the 4,251,695 bp regions covered by 90 P1, TAC and BAC clones.</title>
        <authorList>
            <person name="Kaneko T."/>
            <person name="Katoh T."/>
            <person name="Sato S."/>
            <person name="Nakamura Y."/>
            <person name="Asamizu E."/>
            <person name="Tabata S."/>
        </authorList>
    </citation>
    <scope>NUCLEOTIDE SEQUENCE [LARGE SCALE GENOMIC DNA]</scope>
    <source>
        <strain>cv. Columbia</strain>
    </source>
</reference>
<reference key="3">
    <citation type="journal article" date="2017" name="Plant J.">
        <title>Araport11: a complete reannotation of the Arabidopsis thaliana reference genome.</title>
        <authorList>
            <person name="Cheng C.Y."/>
            <person name="Krishnakumar V."/>
            <person name="Chan A.P."/>
            <person name="Thibaud-Nissen F."/>
            <person name="Schobel S."/>
            <person name="Town C.D."/>
        </authorList>
    </citation>
    <scope>GENOME REANNOTATION</scope>
    <source>
        <strain>cv. Columbia</strain>
    </source>
</reference>
<reference key="4">
    <citation type="journal article" date="2003" name="Science">
        <title>Empirical analysis of transcriptional activity in the Arabidopsis genome.</title>
        <authorList>
            <person name="Yamada K."/>
            <person name="Lim J."/>
            <person name="Dale J.M."/>
            <person name="Chen H."/>
            <person name="Shinn P."/>
            <person name="Palm C.J."/>
            <person name="Southwick A.M."/>
            <person name="Wu H.C."/>
            <person name="Kim C.J."/>
            <person name="Nguyen M."/>
            <person name="Pham P.K."/>
            <person name="Cheuk R.F."/>
            <person name="Karlin-Newmann G."/>
            <person name="Liu S.X."/>
            <person name="Lam B."/>
            <person name="Sakano H."/>
            <person name="Wu T."/>
            <person name="Yu G."/>
            <person name="Miranda M."/>
            <person name="Quach H.L."/>
            <person name="Tripp M."/>
            <person name="Chang C.H."/>
            <person name="Lee J.M."/>
            <person name="Toriumi M.J."/>
            <person name="Chan M.M."/>
            <person name="Tang C.C."/>
            <person name="Onodera C.S."/>
            <person name="Deng J.M."/>
            <person name="Akiyama K."/>
            <person name="Ansari Y."/>
            <person name="Arakawa T."/>
            <person name="Banh J."/>
            <person name="Banno F."/>
            <person name="Bowser L."/>
            <person name="Brooks S.Y."/>
            <person name="Carninci P."/>
            <person name="Chao Q."/>
            <person name="Choy N."/>
            <person name="Enju A."/>
            <person name="Goldsmith A.D."/>
            <person name="Gurjal M."/>
            <person name="Hansen N.F."/>
            <person name="Hayashizaki Y."/>
            <person name="Johnson-Hopson C."/>
            <person name="Hsuan V.W."/>
            <person name="Iida K."/>
            <person name="Karnes M."/>
            <person name="Khan S."/>
            <person name="Koesema E."/>
            <person name="Ishida J."/>
            <person name="Jiang P.X."/>
            <person name="Jones T."/>
            <person name="Kawai J."/>
            <person name="Kamiya A."/>
            <person name="Meyers C."/>
            <person name="Nakajima M."/>
            <person name="Narusaka M."/>
            <person name="Seki M."/>
            <person name="Sakurai T."/>
            <person name="Satou M."/>
            <person name="Tamse R."/>
            <person name="Vaysberg M."/>
            <person name="Wallender E.K."/>
            <person name="Wong C."/>
            <person name="Yamamura Y."/>
            <person name="Yuan S."/>
            <person name="Shinozaki K."/>
            <person name="Davis R.W."/>
            <person name="Theologis A."/>
            <person name="Ecker J.R."/>
        </authorList>
    </citation>
    <scope>NUCLEOTIDE SEQUENCE [LARGE SCALE MRNA]</scope>
    <source>
        <strain>cv. Columbia</strain>
    </source>
</reference>
<reference key="5">
    <citation type="journal article" date="2009" name="DNA Res.">
        <title>Analysis of multiple occurrences of alternative splicing events in Arabidopsis thaliana using novel sequenced full-length cDNAs.</title>
        <authorList>
            <person name="Iida K."/>
            <person name="Fukami-Kobayashi K."/>
            <person name="Toyoda A."/>
            <person name="Sakaki Y."/>
            <person name="Kobayashi M."/>
            <person name="Seki M."/>
            <person name="Shinozaki K."/>
        </authorList>
    </citation>
    <scope>NUCLEOTIDE SEQUENCE [LARGE SCALE MRNA]</scope>
    <source>
        <strain>cv. Columbia</strain>
    </source>
</reference>
<reference key="6">
    <citation type="submission" date="2006-07" db="EMBL/GenBank/DDBJ databases">
        <title>Large-scale analysis of RIKEN Arabidopsis full-length (RAFL) cDNAs.</title>
        <authorList>
            <person name="Totoki Y."/>
            <person name="Seki M."/>
            <person name="Ishida J."/>
            <person name="Nakajima M."/>
            <person name="Enju A."/>
            <person name="Kamiya A."/>
            <person name="Narusaka M."/>
            <person name="Shin-i T."/>
            <person name="Nakagawa M."/>
            <person name="Sakamoto N."/>
            <person name="Oishi K."/>
            <person name="Kohara Y."/>
            <person name="Kobayashi M."/>
            <person name="Toyoda A."/>
            <person name="Sakaki Y."/>
            <person name="Sakurai T."/>
            <person name="Iida K."/>
            <person name="Akiyama K."/>
            <person name="Satou M."/>
            <person name="Toyoda T."/>
            <person name="Konagaya A."/>
            <person name="Carninci P."/>
            <person name="Kawai J."/>
            <person name="Hayashizaki Y."/>
            <person name="Shinozaki K."/>
        </authorList>
    </citation>
    <scope>NUCLEOTIDE SEQUENCE [LARGE SCALE MRNA]</scope>
    <source>
        <strain>cv. Columbia</strain>
    </source>
</reference>
<reference key="7">
    <citation type="journal article" date="2008" name="BMC Genomics">
        <title>Genome-wide and expression analysis of protein phosphatase 2C in rice and Arabidopsis.</title>
        <authorList>
            <person name="Xue T."/>
            <person name="Wang D."/>
            <person name="Zhang S."/>
            <person name="Ehlting J."/>
            <person name="Ni F."/>
            <person name="Jacab S."/>
            <person name="Zheng C."/>
            <person name="Zhong Y."/>
        </authorList>
    </citation>
    <scope>GENE FAMILY</scope>
    <scope>NOMENCLATURE</scope>
</reference>
<reference key="8">
    <citation type="journal article" date="2014" name="Plant Cell">
        <title>SAUR inhibition of PP2C-D phosphatases activates plasma membrane H+-ATPases to promote cell expansion in Arabidopsis.</title>
        <authorList>
            <person name="Spartz A.K."/>
            <person name="Ren H."/>
            <person name="Park M.Y."/>
            <person name="Grandt K.N."/>
            <person name="Lee S.H."/>
            <person name="Murphy A.S."/>
            <person name="Sussman M.R."/>
            <person name="Overvoorde P.J."/>
            <person name="Gray W.M."/>
        </authorList>
    </citation>
    <scope>GENE FAMILY</scope>
    <scope>NOMENCLATURE</scope>
    <source>
        <strain>cv. Columbia</strain>
    </source>
</reference>
<reference key="9">
    <citation type="journal article" date="2016" name="PLoS Pathog.">
        <title>The Arabidopsis protein phosphatase PP2C38 negatively regulates the central immune kinase BIK1.</title>
        <authorList>
            <person name="Couto D."/>
            <person name="Niebergall R."/>
            <person name="Liang X."/>
            <person name="Buecherl C.A."/>
            <person name="Sklenar J."/>
            <person name="Macho A.P."/>
            <person name="Ntoukakis V."/>
            <person name="Derbyshire P."/>
            <person name="Altenbach D."/>
            <person name="Maclean D."/>
            <person name="Robatzek S."/>
            <person name="Uhrig J."/>
            <person name="Menke F."/>
            <person name="Zhou J.M."/>
            <person name="Zipfel C."/>
        </authorList>
    </citation>
    <scope>FUNCTION</scope>
    <scope>CATALYTIC ACTIVITY</scope>
    <scope>INTERACTION WITH BIK1</scope>
    <scope>SUBCELLULAR LOCATION</scope>
    <scope>PHOSPHORYLATION AT SER-77</scope>
    <scope>MUTAGENESIS OF ASP-88 AND ASP-289</scope>
</reference>
<protein>
    <recommendedName>
        <fullName evidence="5">Probable protein phosphatase 2C 38</fullName>
        <shortName evidence="5">AtPP2C38</shortName>
        <ecNumber evidence="4">3.1.3.16</ecNumber>
    </recommendedName>
</protein>